<proteinExistence type="evidence at protein level"/>
<dbReference type="EC" id="3.1.26.4" evidence="5"/>
<dbReference type="EC" id="3.1.3.73" evidence="5"/>
<dbReference type="EMBL" id="AL123456">
    <property type="protein sequence ID" value="CCP45006.1"/>
    <property type="molecule type" value="Genomic_DNA"/>
</dbReference>
<dbReference type="PIR" id="H70776">
    <property type="entry name" value="H70776"/>
</dbReference>
<dbReference type="RefSeq" id="NP_216744.1">
    <property type="nucleotide sequence ID" value="NC_000962.3"/>
</dbReference>
<dbReference type="RefSeq" id="WP_003899226.1">
    <property type="nucleotide sequence ID" value="NZ_NVQJ01000008.1"/>
</dbReference>
<dbReference type="PDB" id="3HST">
    <property type="method" value="X-ray"/>
    <property type="resolution" value="2.25 A"/>
    <property type="chains" value="B/D=2-140"/>
</dbReference>
<dbReference type="PDBsum" id="3HST"/>
<dbReference type="SMR" id="P9WLH5"/>
<dbReference type="FunCoup" id="P9WLH5">
    <property type="interactions" value="133"/>
</dbReference>
<dbReference type="STRING" id="83332.Rv2228c"/>
<dbReference type="PaxDb" id="83332-Rv2228c"/>
<dbReference type="DNASU" id="888108"/>
<dbReference type="GeneID" id="888108"/>
<dbReference type="KEGG" id="mtu:Rv2228c"/>
<dbReference type="KEGG" id="mtv:RVBD_2228c"/>
<dbReference type="TubercuList" id="Rv2228c"/>
<dbReference type="eggNOG" id="COG0328">
    <property type="taxonomic scope" value="Bacteria"/>
</dbReference>
<dbReference type="eggNOG" id="COG0406">
    <property type="taxonomic scope" value="Bacteria"/>
</dbReference>
<dbReference type="InParanoid" id="P9WLH5"/>
<dbReference type="OrthoDB" id="5296884at2"/>
<dbReference type="PhylomeDB" id="P9WLH5"/>
<dbReference type="BRENDA" id="3.1.26.4">
    <property type="organism ID" value="3445"/>
</dbReference>
<dbReference type="BRENDA" id="3.1.3.73">
    <property type="organism ID" value="3445"/>
</dbReference>
<dbReference type="UniPathway" id="UPA00061">
    <property type="reaction ID" value="UER00517"/>
</dbReference>
<dbReference type="EvolutionaryTrace" id="P9WLH5"/>
<dbReference type="Proteomes" id="UP000001584">
    <property type="component" value="Chromosome"/>
</dbReference>
<dbReference type="GO" id="GO:0043755">
    <property type="term" value="F:alpha-ribazole phosphatase activity"/>
    <property type="evidence" value="ECO:0000314"/>
    <property type="project" value="MTBBASE"/>
</dbReference>
<dbReference type="GO" id="GO:0071667">
    <property type="term" value="F:DNA/RNA hybrid binding"/>
    <property type="evidence" value="ECO:0000314"/>
    <property type="project" value="MTBBASE"/>
</dbReference>
<dbReference type="GO" id="GO:0032296">
    <property type="term" value="F:double-stranded RNA-specific ribonuclease activity"/>
    <property type="evidence" value="ECO:0000314"/>
    <property type="project" value="MTBBASE"/>
</dbReference>
<dbReference type="GO" id="GO:0046872">
    <property type="term" value="F:metal ion binding"/>
    <property type="evidence" value="ECO:0007669"/>
    <property type="project" value="UniProtKB-KW"/>
</dbReference>
<dbReference type="GO" id="GO:0004523">
    <property type="term" value="F:RNA-DNA hybrid ribonuclease activity"/>
    <property type="evidence" value="ECO:0000314"/>
    <property type="project" value="MTBBASE"/>
</dbReference>
<dbReference type="GO" id="GO:0009236">
    <property type="term" value="P:cobalamin biosynthetic process"/>
    <property type="evidence" value="ECO:0000314"/>
    <property type="project" value="MTBBASE"/>
</dbReference>
<dbReference type="GO" id="GO:0006401">
    <property type="term" value="P:RNA catabolic process"/>
    <property type="evidence" value="ECO:0000314"/>
    <property type="project" value="MTBBASE"/>
</dbReference>
<dbReference type="CDD" id="cd07067">
    <property type="entry name" value="HP_PGM_like"/>
    <property type="match status" value="1"/>
</dbReference>
<dbReference type="CDD" id="cd09279">
    <property type="entry name" value="RNase_HI_like"/>
    <property type="match status" value="1"/>
</dbReference>
<dbReference type="FunFam" id="3.40.50.1240:FF:000060">
    <property type="entry name" value="Bifunctional RNase H/acid phosphatase"/>
    <property type="match status" value="1"/>
</dbReference>
<dbReference type="FunFam" id="3.30.420.10:FF:000076">
    <property type="entry name" value="RBR-type E3 ubiquitin transferase"/>
    <property type="match status" value="1"/>
</dbReference>
<dbReference type="Gene3D" id="3.40.50.1240">
    <property type="entry name" value="Phosphoglycerate mutase-like"/>
    <property type="match status" value="1"/>
</dbReference>
<dbReference type="Gene3D" id="3.30.420.10">
    <property type="entry name" value="Ribonuclease H-like superfamily/Ribonuclease H"/>
    <property type="match status" value="1"/>
</dbReference>
<dbReference type="InterPro" id="IPR013078">
    <property type="entry name" value="His_Pase_superF_clade-1"/>
</dbReference>
<dbReference type="InterPro" id="IPR029033">
    <property type="entry name" value="His_PPase_superfam"/>
</dbReference>
<dbReference type="InterPro" id="IPR050275">
    <property type="entry name" value="PGM_Phosphatase"/>
</dbReference>
<dbReference type="InterPro" id="IPR012337">
    <property type="entry name" value="RNaseH-like_sf"/>
</dbReference>
<dbReference type="InterPro" id="IPR014636">
    <property type="entry name" value="RNaseH/PGlycerate_mutase"/>
</dbReference>
<dbReference type="InterPro" id="IPR002156">
    <property type="entry name" value="RNaseH_domain"/>
</dbReference>
<dbReference type="InterPro" id="IPR036397">
    <property type="entry name" value="RNaseH_sf"/>
</dbReference>
<dbReference type="NCBIfam" id="NF005567">
    <property type="entry name" value="PRK07238.1"/>
    <property type="match status" value="1"/>
</dbReference>
<dbReference type="PANTHER" id="PTHR48100">
    <property type="entry name" value="BROAD-SPECIFICITY PHOSPHATASE YOR283W-RELATED"/>
    <property type="match status" value="1"/>
</dbReference>
<dbReference type="PANTHER" id="PTHR48100:SF62">
    <property type="entry name" value="GLUCOSYL-3-PHOSPHOGLYCERATE PHOSPHATASE"/>
    <property type="match status" value="1"/>
</dbReference>
<dbReference type="Pfam" id="PF00300">
    <property type="entry name" value="His_Phos_1"/>
    <property type="match status" value="1"/>
</dbReference>
<dbReference type="Pfam" id="PF13456">
    <property type="entry name" value="RVT_3"/>
    <property type="match status" value="1"/>
</dbReference>
<dbReference type="PIRSF" id="PIRSF036922">
    <property type="entry name" value="RNaseH_PGAM"/>
    <property type="match status" value="1"/>
</dbReference>
<dbReference type="SMART" id="SM00855">
    <property type="entry name" value="PGAM"/>
    <property type="match status" value="1"/>
</dbReference>
<dbReference type="SUPFAM" id="SSF53254">
    <property type="entry name" value="Phosphoglycerate mutase-like"/>
    <property type="match status" value="1"/>
</dbReference>
<dbReference type="SUPFAM" id="SSF53098">
    <property type="entry name" value="Ribonuclease H-like"/>
    <property type="match status" value="1"/>
</dbReference>
<dbReference type="PROSITE" id="PS50879">
    <property type="entry name" value="RNASE_H_1"/>
    <property type="match status" value="1"/>
</dbReference>
<feature type="chain" id="PRO_0000103981" description="Bifunctional protein Rv2228c">
    <location>
        <begin position="1"/>
        <end position="364"/>
    </location>
</feature>
<feature type="domain" description="RNase H type-1" evidence="4">
    <location>
        <begin position="1"/>
        <end position="139"/>
    </location>
</feature>
<feature type="active site" description="Tele-phosphohistidine intermediate" evidence="3">
    <location>
        <position position="172"/>
    </location>
</feature>
<feature type="active site" description="Proton donor/acceptor; for phosphatase activity" evidence="3">
    <location>
        <position position="246"/>
    </location>
</feature>
<feature type="binding site" evidence="1 8">
    <location>
        <position position="8"/>
    </location>
    <ligand>
        <name>Mg(2+)</name>
        <dbReference type="ChEBI" id="CHEBI:18420"/>
        <label>1</label>
    </ligand>
</feature>
<feature type="binding site" evidence="1 8">
    <location>
        <position position="8"/>
    </location>
    <ligand>
        <name>Mg(2+)</name>
        <dbReference type="ChEBI" id="CHEBI:18420"/>
        <label>2</label>
    </ligand>
</feature>
<feature type="binding site" evidence="1 8">
    <location>
        <position position="49"/>
    </location>
    <ligand>
        <name>Mg(2+)</name>
        <dbReference type="ChEBI" id="CHEBI:18420"/>
        <label>1</label>
    </ligand>
</feature>
<feature type="binding site" evidence="1 8">
    <location>
        <position position="73"/>
    </location>
    <ligand>
        <name>Mg(2+)</name>
        <dbReference type="ChEBI" id="CHEBI:18420"/>
        <label>1</label>
    </ligand>
</feature>
<feature type="binding site" evidence="1 8">
    <location>
        <position position="123"/>
    </location>
    <ligand>
        <name>Mg(2+)</name>
        <dbReference type="ChEBI" id="CHEBI:18420"/>
        <label>2</label>
    </ligand>
</feature>
<feature type="strand" evidence="9">
    <location>
        <begin position="2"/>
        <end position="26"/>
    </location>
</feature>
<feature type="strand" evidence="9">
    <location>
        <begin position="31"/>
        <end position="43"/>
    </location>
</feature>
<feature type="helix" evidence="9">
    <location>
        <begin position="45"/>
        <end position="63"/>
    </location>
</feature>
<feature type="strand" evidence="9">
    <location>
        <begin position="66"/>
        <end position="73"/>
    </location>
</feature>
<feature type="helix" evidence="9">
    <location>
        <begin position="75"/>
        <end position="81"/>
    </location>
</feature>
<feature type="helix" evidence="9">
    <location>
        <begin position="90"/>
        <end position="103"/>
    </location>
</feature>
<feature type="strand" evidence="9">
    <location>
        <begin position="106"/>
        <end position="113"/>
    </location>
</feature>
<feature type="helix" evidence="9">
    <location>
        <begin position="116"/>
        <end position="118"/>
    </location>
</feature>
<feature type="helix" evidence="9">
    <location>
        <begin position="120"/>
        <end position="135"/>
    </location>
</feature>
<protein>
    <recommendedName>
        <fullName evidence="6">Bifunctional protein Rv2228c</fullName>
    </recommendedName>
    <domain>
        <recommendedName>
            <fullName evidence="6">Ribonuclease H</fullName>
            <ecNumber evidence="5">3.1.26.4</ecNumber>
        </recommendedName>
    </domain>
    <domain>
        <recommendedName>
            <fullName evidence="7">Adenosylcobalamin/alpha-ribazole phosphatase</fullName>
            <ecNumber evidence="5">3.1.3.73</ecNumber>
        </recommendedName>
    </domain>
</protein>
<evidence type="ECO:0000250" key="1">
    <source>
        <dbReference type="UniProtKB" id="P0A7Y4"/>
    </source>
</evidence>
<evidence type="ECO:0000250" key="2">
    <source>
        <dbReference type="UniProtKB" id="P39701"/>
    </source>
</evidence>
<evidence type="ECO:0000250" key="3">
    <source>
        <dbReference type="UniProtKB" id="P62707"/>
    </source>
</evidence>
<evidence type="ECO:0000255" key="4">
    <source>
        <dbReference type="PROSITE-ProRule" id="PRU00408"/>
    </source>
</evidence>
<evidence type="ECO:0000269" key="5">
    <source>
    </source>
</evidence>
<evidence type="ECO:0000303" key="6">
    <source>
    </source>
</evidence>
<evidence type="ECO:0000305" key="7"/>
<evidence type="ECO:0000305" key="8">
    <source>
    </source>
</evidence>
<evidence type="ECO:0007829" key="9">
    <source>
        <dbReference type="PDB" id="3HST"/>
    </source>
</evidence>
<gene>
    <name type="ordered locus">Rv2228c</name>
    <name type="ORF">MTCY427.09c</name>
</gene>
<sequence length="364" mass="39145">MKVVIEADGGSRGNPGPAGYGAVVWTADHSTVLAESKQAIGRATNNVAEYRGLIAGLDDAVKLGATEAAVLMDSKLVVEQMSGRWKVKHPDLLKLYVQAQALASQFRRINYEWVPRARNTYADRLANDAMDAAAQSAAADADPAKIVATESPTSPGWTGARGTPTRLLLLRHGQTELSEQRRYSGRGNPGLNEVGWRQVGAAAGYLARRGGIAAVVSSPLQRAYDTAVTAARALALDVVVDDDLVETDFGAWEGLTFAEAAERDPELHRRWLQDTSITPPGGESFDDVLRRVRRGRDRIIVGYEGATVLVVSHVTPIKMLLRLALDAGSGVLYRLHLDLASLSIAEFYADGASSVRLVNQTGYL</sequence>
<comment type="function">
    <text evidence="5">Endonuclease that displays both RNase H activity with a hybrid RNA/DNA substrate as well as double-stranded RNase activity. As the only authenticated RNase HI in M.tuberculosis, probably plays an important role in the physiology of this organism, being likely involved in bacterial replication.</text>
</comment>
<comment type="function">
    <text evidence="2 5">Catalyzes the hydrolysis of the phospho group from alpha-ribazole 5'-phosphate to form alpha-ribazole (PubMed:20363939). May also catalyze the conversion of adenosylcobalamin 5'-phosphate to adenosylcobalamin (vitamin B12) (By similarity). Has a possible role in B12 recycling, but the primary role of the C-terminal domain of this phosphatase enzyme could be phosphate generation to help bacterial survival within the macrophage, which is a phosphate-deprived environment (PubMed:20363939).</text>
</comment>
<comment type="catalytic activity">
    <reaction evidence="5">
        <text>Endonucleolytic cleavage to 5'-phosphomonoester.</text>
        <dbReference type="EC" id="3.1.26.4"/>
    </reaction>
</comment>
<comment type="catalytic activity">
    <reaction evidence="2">
        <text>adenosylcob(III)alamin 5'-phosphate + H2O = adenosylcob(III)alamin + phosphate</text>
        <dbReference type="Rhea" id="RHEA:30367"/>
        <dbReference type="ChEBI" id="CHEBI:15377"/>
        <dbReference type="ChEBI" id="CHEBI:18408"/>
        <dbReference type="ChEBI" id="CHEBI:43474"/>
        <dbReference type="ChEBI" id="CHEBI:60493"/>
        <dbReference type="EC" id="3.1.3.73"/>
    </reaction>
</comment>
<comment type="catalytic activity">
    <reaction evidence="5">
        <text>alpha-ribazole 5'-phosphate + H2O = alpha-ribazole + phosphate</text>
        <dbReference type="Rhea" id="RHEA:24456"/>
        <dbReference type="ChEBI" id="CHEBI:10329"/>
        <dbReference type="ChEBI" id="CHEBI:15377"/>
        <dbReference type="ChEBI" id="CHEBI:43474"/>
        <dbReference type="ChEBI" id="CHEBI:57918"/>
        <dbReference type="EC" id="3.1.3.73"/>
    </reaction>
</comment>
<comment type="cofactor">
    <cofactor evidence="1 8">
        <name>Mg(2+)</name>
        <dbReference type="ChEBI" id="CHEBI:18420"/>
    </cofactor>
    <text evidence="8">Binds 2 divalent metal cations per subunit, which may be Mg(2+) or Mn(2+), and which are essential for catalysis.</text>
</comment>
<comment type="biophysicochemical properties">
    <kinetics>
        <KM evidence="5">173 nM for a hybrid RNA/DNA substrate</KM>
        <KM evidence="5">172.6 nM for an RNA/RNA substrate</KM>
        <KM evidence="5">5.5 mM for p-nitrophenol phosphate</KM>
        <KM evidence="5">1.07 mM for alpha-ribazole 5'-phosphate</KM>
        <text evidence="5">Vmax value for RNase H activity is identical to that for dsRNase activity.</text>
    </kinetics>
    <phDependence>
        <text evidence="5">Optimum pH is 4 for phosphatase activity using p-nitrophenol phosphate as a substrate.</text>
    </phDependence>
</comment>
<comment type="pathway">
    <text>Nucleoside biosynthesis; alpha-ribazole biosynthesis; alpha-ribazole from 5,6-dimethylbenzimidazole: step 2/2.</text>
</comment>
<comment type="subunit">
    <text evidence="5">The N-terminal domain alone is monomeric in solution but associates in the crystal to form a dimer.</text>
</comment>
<comment type="domain">
    <text evidence="5">Is composed of two domains, the N-terminal domain displays RNase activity and the C-terminal domain has both acid phosphatase and CobC activity, together with a role in enhancing the RNase H and dsRNase activities of the N-terminal domain.</text>
</comment>
<comment type="similarity">
    <text evidence="7">In the N-terminal section; belongs to the RNase H family.</text>
</comment>
<comment type="similarity">
    <text evidence="7">In the C-terminal section; belongs to the histidine phosphatase superfamily.</text>
</comment>
<reference key="1">
    <citation type="journal article" date="1998" name="Nature">
        <title>Deciphering the biology of Mycobacterium tuberculosis from the complete genome sequence.</title>
        <authorList>
            <person name="Cole S.T."/>
            <person name="Brosch R."/>
            <person name="Parkhill J."/>
            <person name="Garnier T."/>
            <person name="Churcher C.M."/>
            <person name="Harris D.E."/>
            <person name="Gordon S.V."/>
            <person name="Eiglmeier K."/>
            <person name="Gas S."/>
            <person name="Barry C.E. III"/>
            <person name="Tekaia F."/>
            <person name="Badcock K."/>
            <person name="Basham D."/>
            <person name="Brown D."/>
            <person name="Chillingworth T."/>
            <person name="Connor R."/>
            <person name="Davies R.M."/>
            <person name="Devlin K."/>
            <person name="Feltwell T."/>
            <person name="Gentles S."/>
            <person name="Hamlin N."/>
            <person name="Holroyd S."/>
            <person name="Hornsby T."/>
            <person name="Jagels K."/>
            <person name="Krogh A."/>
            <person name="McLean J."/>
            <person name="Moule S."/>
            <person name="Murphy L.D."/>
            <person name="Oliver S."/>
            <person name="Osborne J."/>
            <person name="Quail M.A."/>
            <person name="Rajandream M.A."/>
            <person name="Rogers J."/>
            <person name="Rutter S."/>
            <person name="Seeger K."/>
            <person name="Skelton S."/>
            <person name="Squares S."/>
            <person name="Squares R."/>
            <person name="Sulston J.E."/>
            <person name="Taylor K."/>
            <person name="Whitehead S."/>
            <person name="Barrell B.G."/>
        </authorList>
    </citation>
    <scope>NUCLEOTIDE SEQUENCE [LARGE SCALE GENOMIC DNA]</scope>
    <source>
        <strain>ATCC 25618 / H37Rv</strain>
    </source>
</reference>
<reference key="2">
    <citation type="journal article" date="2008" name="Acta Crystallogr. F">
        <title>Cloning, expression, purification and preliminary crystallographic analysis of the RNase HI domain of the Mycobacterium tuberculosis protein Rv2228c as a maltose-binding protein fusion.</title>
        <authorList>
            <person name="Watkins H.A."/>
            <person name="Baker E.N."/>
        </authorList>
    </citation>
    <scope>CRYSTALLIZATION</scope>
    <source>
        <strain>H37Rv</strain>
    </source>
</reference>
<reference key="3">
    <citation type="journal article" date="2011" name="Mol. Cell. Proteomics">
        <title>Proteogenomic analysis of Mycobacterium tuberculosis by high resolution mass spectrometry.</title>
        <authorList>
            <person name="Kelkar D.S."/>
            <person name="Kumar D."/>
            <person name="Kumar P."/>
            <person name="Balakrishnan L."/>
            <person name="Muthusamy B."/>
            <person name="Yadav A.K."/>
            <person name="Shrivastava P."/>
            <person name="Marimuthu A."/>
            <person name="Anand S."/>
            <person name="Sundaram H."/>
            <person name="Kingsbury R."/>
            <person name="Harsha H.C."/>
            <person name="Nair B."/>
            <person name="Prasad T.S."/>
            <person name="Chauhan D.S."/>
            <person name="Katoch K."/>
            <person name="Katoch V.M."/>
            <person name="Kumar P."/>
            <person name="Chaerkady R."/>
            <person name="Ramachandran S."/>
            <person name="Dash D."/>
            <person name="Pandey A."/>
        </authorList>
    </citation>
    <scope>IDENTIFICATION BY MASS SPECTROMETRY [LARGE SCALE ANALYSIS]</scope>
    <source>
        <strain>ATCC 25618 / H37Rv</strain>
    </source>
</reference>
<reference key="4">
    <citation type="journal article" date="2010" name="J. Bacteriol.">
        <title>Structural and functional characterization of an RNase HI domain from the bifunctional protein Rv2228c from Mycobacterium tuberculosis.</title>
        <authorList>
            <person name="Watkins H.A."/>
            <person name="Baker E.N."/>
        </authorList>
    </citation>
    <scope>X-RAY CRYSTALLOGRAPHY (2.25 ANGSTROMS) OF 2-140</scope>
    <scope>FUNCTION</scope>
    <scope>CATALYTIC ACTIVITY</scope>
    <scope>BIOPHYSICOCHEMICAL PROPERTIES</scope>
    <scope>COFACTOR</scope>
    <scope>SUBUNIT</scope>
    <scope>DOMAIN</scope>
    <source>
        <strain>H37Rv</strain>
    </source>
</reference>
<organism>
    <name type="scientific">Mycobacterium tuberculosis (strain ATCC 25618 / H37Rv)</name>
    <dbReference type="NCBI Taxonomy" id="83332"/>
    <lineage>
        <taxon>Bacteria</taxon>
        <taxon>Bacillati</taxon>
        <taxon>Actinomycetota</taxon>
        <taxon>Actinomycetes</taxon>
        <taxon>Mycobacteriales</taxon>
        <taxon>Mycobacteriaceae</taxon>
        <taxon>Mycobacterium</taxon>
        <taxon>Mycobacterium tuberculosis complex</taxon>
    </lineage>
</organism>
<keyword id="KW-0002">3D-structure</keyword>
<keyword id="KW-0255">Endonuclease</keyword>
<keyword id="KW-0378">Hydrolase</keyword>
<keyword id="KW-0460">Magnesium</keyword>
<keyword id="KW-0479">Metal-binding</keyword>
<keyword id="KW-0511">Multifunctional enzyme</keyword>
<keyword id="KW-0540">Nuclease</keyword>
<keyword id="KW-1185">Reference proteome</keyword>
<name>RNHPH_MYCTU</name>
<accession>P9WLH5</accession>
<accession>L0TBW1</accession>
<accession>P64955</accession>
<accession>Q10512</accession>